<gene>
    <name evidence="6" type="primary">cle2</name>
</gene>
<comment type="function">
    <text evidence="5">Cytochrome P450 monooxygenase; part of the cluster A that mediates the biosynthesis of chevalone E and its oxidized derivatives that possess a unique five-membered lactone ring and can synergistically enhance the cytotoxicity of doxorubicin (DOX) in breast cancer cells (Ref.1). Within the pathway, cle2 is involved in hydroxylation of the chavalone E scaffold at position C-20 and contributes with cle4 to the production of seven oxidation derivatives (Ref.1). The molecular scaffold is commonly biosynthesized by a series of enzymes including the non-reducing polyketide synthase (NR-PKS) cle1 that produces the alpha-pyrone triacetic acid lactone (TAL); The membrane-bound prenyltransferase cle5 that accepts TAL as its substrate to perform a C-3 geranylgeranylation reaction, in which the pathway-dedicated GGPS cle6 is required to provide GGPP, the other substrate of cle5; the FAD-dependent monooxygenase Cle3 that forms an (S)-epoxide ring at the terminal olefin of the geranylgeranyl group; and the terpene cyclase Cle7 that catalyzes the cyclization of the prenyl group that yields the pentacyclic pathway intermediate chevalone E (Ref.1). Chevalone E can derivatize into seven new oxidized analogs by the cytochrome P450 monooxygenases cle2 (acting at C-20) and cle4 (acting at C-11 and C-12) (Ref.1).</text>
</comment>
<comment type="cofactor">
    <cofactor evidence="1">
        <name>heme</name>
        <dbReference type="ChEBI" id="CHEBI:30413"/>
    </cofactor>
</comment>
<comment type="pathway">
    <text evidence="5">Secondary metabolite biosynthesis; terpenoid biosynthesis.</text>
</comment>
<comment type="subcellular location">
    <subcellularLocation>
        <location evidence="2">Membrane</location>
        <topology evidence="2">Single-pass membrane protein</topology>
    </subcellularLocation>
</comment>
<comment type="biotechnology">
    <text evidence="5">Chevalone E derivatives produced by this cluster are interesting candidates for cancer therapy since they synergistically enhance the cytotoxicity of doxorubicin (DOX) in both MDA-MB-231 and MCF-7 breast cancer cell lines.</text>
</comment>
<comment type="similarity">
    <text evidence="7">Belongs to the cytochrome P450 family.</text>
</comment>
<name>CLE2_ASPVE</name>
<evidence type="ECO:0000250" key="1">
    <source>
        <dbReference type="UniProtKB" id="P04798"/>
    </source>
</evidence>
<evidence type="ECO:0000255" key="2"/>
<evidence type="ECO:0000255" key="3">
    <source>
        <dbReference type="PIRSR" id="PIRSR602403-1"/>
    </source>
</evidence>
<evidence type="ECO:0000256" key="4">
    <source>
        <dbReference type="SAM" id="MobiDB-lite"/>
    </source>
</evidence>
<evidence type="ECO:0000269" key="5">
    <source ref="1"/>
</evidence>
<evidence type="ECO:0000303" key="6">
    <source ref="1"/>
</evidence>
<evidence type="ECO:0000305" key="7"/>
<reference key="1">
    <citation type="journal article" date="2019" name="Org. Chem. Front.">
        <title>Genome mining for fungal polyketide-diterpenoid hybrids: discovery of key terpene cyclases and multifunctional P450s for structural diversification.</title>
        <authorList>
            <person name="Wang W.G."/>
            <person name="Du L.Q."/>
            <person name="Sheng S.L."/>
            <person name="Li A."/>
            <person name="Li Y.P."/>
            <person name="Cheng G.G."/>
            <person name="Li G.P."/>
            <person name="Sun G."/>
            <person name="Hu Q."/>
            <person name="Matsuda Y."/>
        </authorList>
    </citation>
    <scope>NUCLEOTIDE SEQUENCE [GENOMIC DNA]</scope>
    <scope>FUNCTION</scope>
    <scope>CATALYTIC ACTIVITY</scope>
    <scope>PATHWAY</scope>
    <scope>BIOTECHNOLOGY</scope>
    <source>
        <strain>0312</strain>
    </source>
</reference>
<dbReference type="EC" id="1.-.-.-" evidence="5"/>
<dbReference type="EMBL" id="LC422695">
    <property type="protein sequence ID" value="BBG28472.1"/>
    <property type="molecule type" value="Genomic_DNA"/>
</dbReference>
<dbReference type="VEuPathDB" id="FungiDB:ASPVEDRAFT_67394"/>
<dbReference type="UniPathway" id="UPA00213"/>
<dbReference type="GO" id="GO:0016020">
    <property type="term" value="C:membrane"/>
    <property type="evidence" value="ECO:0007669"/>
    <property type="project" value="UniProtKB-SubCell"/>
</dbReference>
<dbReference type="GO" id="GO:0020037">
    <property type="term" value="F:heme binding"/>
    <property type="evidence" value="ECO:0007669"/>
    <property type="project" value="InterPro"/>
</dbReference>
<dbReference type="GO" id="GO:0005506">
    <property type="term" value="F:iron ion binding"/>
    <property type="evidence" value="ECO:0007669"/>
    <property type="project" value="InterPro"/>
</dbReference>
<dbReference type="GO" id="GO:0004497">
    <property type="term" value="F:monooxygenase activity"/>
    <property type="evidence" value="ECO:0007669"/>
    <property type="project" value="UniProtKB-KW"/>
</dbReference>
<dbReference type="GO" id="GO:0016705">
    <property type="term" value="F:oxidoreductase activity, acting on paired donors, with incorporation or reduction of molecular oxygen"/>
    <property type="evidence" value="ECO:0007669"/>
    <property type="project" value="InterPro"/>
</dbReference>
<dbReference type="GO" id="GO:0019748">
    <property type="term" value="P:secondary metabolic process"/>
    <property type="evidence" value="ECO:0007669"/>
    <property type="project" value="UniProtKB-ARBA"/>
</dbReference>
<dbReference type="CDD" id="cd11041">
    <property type="entry name" value="CYP503A1-like"/>
    <property type="match status" value="1"/>
</dbReference>
<dbReference type="Gene3D" id="1.10.630.10">
    <property type="entry name" value="Cytochrome P450"/>
    <property type="match status" value="1"/>
</dbReference>
<dbReference type="InterPro" id="IPR001128">
    <property type="entry name" value="Cyt_P450"/>
</dbReference>
<dbReference type="InterPro" id="IPR017972">
    <property type="entry name" value="Cyt_P450_CS"/>
</dbReference>
<dbReference type="InterPro" id="IPR002403">
    <property type="entry name" value="Cyt_P450_E_grp-IV"/>
</dbReference>
<dbReference type="InterPro" id="IPR036396">
    <property type="entry name" value="Cyt_P450_sf"/>
</dbReference>
<dbReference type="PANTHER" id="PTHR46206">
    <property type="entry name" value="CYTOCHROME P450"/>
    <property type="match status" value="1"/>
</dbReference>
<dbReference type="PANTHER" id="PTHR46206:SF2">
    <property type="entry name" value="CYTOCHROME P450 MONOOXYGENASE AUSG-RELATED"/>
    <property type="match status" value="1"/>
</dbReference>
<dbReference type="Pfam" id="PF00067">
    <property type="entry name" value="p450"/>
    <property type="match status" value="1"/>
</dbReference>
<dbReference type="PRINTS" id="PR00465">
    <property type="entry name" value="EP450IV"/>
</dbReference>
<dbReference type="SUPFAM" id="SSF48264">
    <property type="entry name" value="Cytochrome P450"/>
    <property type="match status" value="1"/>
</dbReference>
<dbReference type="PROSITE" id="PS00086">
    <property type="entry name" value="CYTOCHROME_P450"/>
    <property type="match status" value="1"/>
</dbReference>
<keyword id="KW-0349">Heme</keyword>
<keyword id="KW-0408">Iron</keyword>
<keyword id="KW-0472">Membrane</keyword>
<keyword id="KW-0479">Metal-binding</keyword>
<keyword id="KW-0503">Monooxygenase</keyword>
<keyword id="KW-0560">Oxidoreductase</keyword>
<keyword id="KW-0812">Transmembrane</keyword>
<keyword id="KW-1133">Transmembrane helix</keyword>
<protein>
    <recommendedName>
        <fullName evidence="6">Cytochrome P450 monooxygenase cle2</fullName>
        <ecNumber evidence="5">1.-.-.-</ecNumber>
    </recommendedName>
    <alternativeName>
        <fullName evidence="6">Chevalone E biosynthesis cluster protein 2</fullName>
    </alternativeName>
</protein>
<sequence length="544" mass="61863">MLQTQLQLQLQGVSIFHQLGLLIGLSLILSITWTAYTILSPYLRVKGKRIFNDRGRSELLWTGARKRFQAGARDLFKSAFAQNPDAFYIMTDTDVELILNSKYAAEVRNDKRFDIGKYNEDMFHGTIAGFEMFEDDHVLERVFVETVRNKLTRAIGKFVEPMSQEAADGLQKQWTDNTEWHALPLHQSILRTISQQSSRVFQGFPLCRNPDWLRITVNHTVTFFEAAESLKVWPHPLRPLAAKFLPLCRKLRAEAEEARGIIAPVLKERRARRTQQVEQSIEKNTKNEKKEDEDEDQNEDEETPGDMIEWAEQTANGAIYDPALLQMKVSLASIHTTSDLVSQAIFNLCSRPELVDDLRKEVISVIGQQGWVKTAIYQLKLMDSVLKETQRLKPISIGTMVRTTTSPVTFTDGLQVPPNTRTLVSCHNMWTDAVHANAAEFDGYRFLKLRQKPGQENWTQLVSTSNNHLGFGHGMHACPGRFFAATTAKVLLAHVVLKYDLKLLDDQKPDIIEHGAAQYANVWCGIGVRRRKEEIDLACPMATV</sequence>
<feature type="chain" id="PRO_0000461037" description="Cytochrome P450 monooxygenase cle2">
    <location>
        <begin position="1"/>
        <end position="544"/>
    </location>
</feature>
<feature type="transmembrane region" description="Helical" evidence="2">
    <location>
        <begin position="19"/>
        <end position="39"/>
    </location>
</feature>
<feature type="region of interest" description="Disordered" evidence="4">
    <location>
        <begin position="273"/>
        <end position="305"/>
    </location>
</feature>
<feature type="compositionally biased region" description="Basic and acidic residues" evidence="4">
    <location>
        <begin position="280"/>
        <end position="290"/>
    </location>
</feature>
<feature type="compositionally biased region" description="Acidic residues" evidence="4">
    <location>
        <begin position="291"/>
        <end position="304"/>
    </location>
</feature>
<feature type="binding site" description="axial binding residue" evidence="3">
    <location>
        <position position="478"/>
    </location>
    <ligand>
        <name>heme</name>
        <dbReference type="ChEBI" id="CHEBI:30413"/>
    </ligand>
    <ligandPart>
        <name>Fe</name>
        <dbReference type="ChEBI" id="CHEBI:18248"/>
    </ligandPart>
</feature>
<organism>
    <name type="scientific">Aspergillus versicolor</name>
    <dbReference type="NCBI Taxonomy" id="46472"/>
    <lineage>
        <taxon>Eukaryota</taxon>
        <taxon>Fungi</taxon>
        <taxon>Dikarya</taxon>
        <taxon>Ascomycota</taxon>
        <taxon>Pezizomycotina</taxon>
        <taxon>Eurotiomycetes</taxon>
        <taxon>Eurotiomycetidae</taxon>
        <taxon>Eurotiales</taxon>
        <taxon>Aspergillaceae</taxon>
        <taxon>Aspergillus</taxon>
        <taxon>Aspergillus subgen. Nidulantes</taxon>
    </lineage>
</organism>
<proteinExistence type="evidence at protein level"/>
<accession>A0A3T0ZHK9</accession>